<accession>Q8PUN1</accession>
<dbReference type="EC" id="1.2.7.4" evidence="1"/>
<dbReference type="EMBL" id="AE008384">
    <property type="protein sequence ID" value="AAM31997.1"/>
    <property type="molecule type" value="Genomic_DNA"/>
</dbReference>
<dbReference type="SMR" id="Q8PUN1"/>
<dbReference type="KEGG" id="mma:MM_2301"/>
<dbReference type="PATRIC" id="fig|192952.21.peg.2636"/>
<dbReference type="eggNOG" id="arCOG02429">
    <property type="taxonomic scope" value="Archaea"/>
</dbReference>
<dbReference type="HOGENOM" id="CLU_030631_0_0_2"/>
<dbReference type="Proteomes" id="UP000000595">
    <property type="component" value="Chromosome"/>
</dbReference>
<dbReference type="GO" id="GO:0051539">
    <property type="term" value="F:4 iron, 4 sulfur cluster binding"/>
    <property type="evidence" value="ECO:0007669"/>
    <property type="project" value="UniProtKB-KW"/>
</dbReference>
<dbReference type="GO" id="GO:0043885">
    <property type="term" value="F:anaerobic carbon-monoxide dehydrogenase activity"/>
    <property type="evidence" value="ECO:0007669"/>
    <property type="project" value="UniProtKB-EC"/>
</dbReference>
<dbReference type="GO" id="GO:0050418">
    <property type="term" value="F:hydroxylamine reductase activity"/>
    <property type="evidence" value="ECO:0007669"/>
    <property type="project" value="TreeGrafter"/>
</dbReference>
<dbReference type="GO" id="GO:0016151">
    <property type="term" value="F:nickel cation binding"/>
    <property type="evidence" value="ECO:0007669"/>
    <property type="project" value="InterPro"/>
</dbReference>
<dbReference type="GO" id="GO:0004601">
    <property type="term" value="F:peroxidase activity"/>
    <property type="evidence" value="ECO:0007669"/>
    <property type="project" value="TreeGrafter"/>
</dbReference>
<dbReference type="GO" id="GO:0006091">
    <property type="term" value="P:generation of precursor metabolites and energy"/>
    <property type="evidence" value="ECO:0007669"/>
    <property type="project" value="InterPro"/>
</dbReference>
<dbReference type="GO" id="GO:0042542">
    <property type="term" value="P:response to hydrogen peroxide"/>
    <property type="evidence" value="ECO:0007669"/>
    <property type="project" value="TreeGrafter"/>
</dbReference>
<dbReference type="CDD" id="cd01915">
    <property type="entry name" value="CODH"/>
    <property type="match status" value="1"/>
</dbReference>
<dbReference type="FunFam" id="1.20.1270.30:FF:000001">
    <property type="entry name" value="Carbon monoxide dehydrogenase"/>
    <property type="match status" value="1"/>
</dbReference>
<dbReference type="FunFam" id="3.40.50.2030:FF:000003">
    <property type="entry name" value="Carbon monoxide dehydrogenase"/>
    <property type="match status" value="1"/>
</dbReference>
<dbReference type="Gene3D" id="1.20.1270.30">
    <property type="match status" value="1"/>
</dbReference>
<dbReference type="Gene3D" id="3.40.50.2030">
    <property type="match status" value="2"/>
</dbReference>
<dbReference type="InterPro" id="IPR016101">
    <property type="entry name" value="CO_DH_a-bundle"/>
</dbReference>
<dbReference type="InterPro" id="IPR010047">
    <property type="entry name" value="CODH"/>
</dbReference>
<dbReference type="InterPro" id="IPR004137">
    <property type="entry name" value="HCP/CODH"/>
</dbReference>
<dbReference type="InterPro" id="IPR016099">
    <property type="entry name" value="Prismane-like_a/b-sand"/>
</dbReference>
<dbReference type="InterPro" id="IPR011254">
    <property type="entry name" value="Prismane-like_sf"/>
</dbReference>
<dbReference type="NCBIfam" id="TIGR01702">
    <property type="entry name" value="CO_DH_cata"/>
    <property type="match status" value="1"/>
</dbReference>
<dbReference type="PANTHER" id="PTHR30109:SF4">
    <property type="entry name" value="CARBON MONOXIDE DEHYDROGENASE"/>
    <property type="match status" value="1"/>
</dbReference>
<dbReference type="PANTHER" id="PTHR30109">
    <property type="entry name" value="HYDROXYLAMINE REDUCTASE"/>
    <property type="match status" value="1"/>
</dbReference>
<dbReference type="Pfam" id="PF03063">
    <property type="entry name" value="Prismane"/>
    <property type="match status" value="1"/>
</dbReference>
<dbReference type="PIRSF" id="PIRSF005023">
    <property type="entry name" value="CODH"/>
    <property type="match status" value="1"/>
</dbReference>
<dbReference type="SUPFAM" id="SSF56821">
    <property type="entry name" value="Prismane protein-like"/>
    <property type="match status" value="1"/>
</dbReference>
<comment type="function">
    <text evidence="1">CODH oxidizes carbon monoxide coupled, via CooF, to the reduction of a hydrogen cation by a hydrogenase (possibly CooH).</text>
</comment>
<comment type="catalytic activity">
    <reaction evidence="1">
        <text>CO + 2 oxidized [2Fe-2S]-[ferredoxin] + H2O = 2 reduced [2Fe-2S]-[ferredoxin] + CO2 + 2 H(+)</text>
        <dbReference type="Rhea" id="RHEA:21040"/>
        <dbReference type="Rhea" id="RHEA-COMP:10000"/>
        <dbReference type="Rhea" id="RHEA-COMP:10001"/>
        <dbReference type="ChEBI" id="CHEBI:15377"/>
        <dbReference type="ChEBI" id="CHEBI:15378"/>
        <dbReference type="ChEBI" id="CHEBI:16526"/>
        <dbReference type="ChEBI" id="CHEBI:17245"/>
        <dbReference type="ChEBI" id="CHEBI:33737"/>
        <dbReference type="ChEBI" id="CHEBI:33738"/>
        <dbReference type="EC" id="1.2.7.4"/>
    </reaction>
</comment>
<comment type="cofactor">
    <cofactor evidence="1">
        <name>[4Fe-4S] cluster</name>
        <dbReference type="ChEBI" id="CHEBI:49883"/>
    </cofactor>
    <text evidence="1">Binds 3 [4Fe-4S] clusters per homodimer.</text>
</comment>
<comment type="cofactor">
    <cofactor evidence="1">
        <name>[Ni-4Fe-5S] cluster</name>
        <dbReference type="ChEBI" id="CHEBI:177874"/>
    </cofactor>
    <text evidence="1">Binds 2 [Ni-4Fe-5S] clusters per homodimer.</text>
</comment>
<comment type="subunit">
    <text evidence="1">Homodimer.</text>
</comment>
<comment type="domain">
    <text evidence="1">Cluster B is an all-cysteinyl-liganded 4Fe-4S cluster; cluster C is a mixed Ni-Fe-S cluster which is the active site of CO oxidation. Cluster D is also an all-cysteinyl-liganded 4Fe-4S cluster that bridges the two subunits of the CODH dimer.</text>
</comment>
<comment type="similarity">
    <text evidence="2">Belongs to the Ni-containing carbon monoxide dehydrogenase family.</text>
</comment>
<comment type="caution">
    <text evidence="2">This protein lacks the conserved Cys in positions 52 and 300; they are replaced by an Arg and a Glu, respectively. It is therefore possible that the C- and D-clusters are either altered or missing in this protein.</text>
</comment>
<proteinExistence type="inferred from homology"/>
<gene>
    <name type="primary">cooS2</name>
    <name type="ordered locus">MM_2301</name>
</gene>
<organism>
    <name type="scientific">Methanosarcina mazei (strain ATCC BAA-159 / DSM 3647 / Goe1 / Go1 / JCM 11833 / OCM 88)</name>
    <name type="common">Methanosarcina frisia</name>
    <dbReference type="NCBI Taxonomy" id="192952"/>
    <lineage>
        <taxon>Archaea</taxon>
        <taxon>Methanobacteriati</taxon>
        <taxon>Methanobacteriota</taxon>
        <taxon>Stenosarchaea group</taxon>
        <taxon>Methanomicrobia</taxon>
        <taxon>Methanosarcinales</taxon>
        <taxon>Methanosarcinaceae</taxon>
        <taxon>Methanosarcina</taxon>
    </lineage>
</organism>
<sequence length="634" mass="69220">MDKERISYHESVQKMYERIKADNMTNVWDRYEAQGIGGVPDRRCTFCMAGARCDLCSNGPCRSDASKDKRGVCGITADGMAMRMMLLRNVMGASTYHYHTDQTIRTLRETARNKTPYSIREPEKLKTFANRLGIDISGSDAEIALNLCEFVEKDFNRPAYEPSRIVEILAPPERKKRWEELGIFPGGIYGEMMLSTSSCLTNVDGYYVSLALKAMRLGIAMAYQSQIVNEYCQDVLFGIPRPHTMRVDLGVLDPEYVNVLPNGHEPFLGFAMVQLARKPEWQEKAKAAGAKGLRVIASIETGQEMIQRWEEDDVFYGFTGNWISQEAVLASRCVDLFAADMNCSLPVAPLYAEKYNFKLMPVSDLVAFEGIEERLNYDPVEAEEQAAKLLDMAVENFKNRNSSGEAALNFPAGEAVVGFSTESILDALGGTLDPLLDAIKSGAIKGVVGMVSCTTLRDYGQDVHSVAVVKELIKRNILVLSMGCGNAAMQVAGLCSPEAREYAGDSLKAVCEALGVPPVLSYGTCTDTGRLADLLGAISGALGGVPVPDLPVAAAAPEYMEQKATIDAIFALALGLYTYVNPVPTVTGAPNLVKLLTEDCREVTGGLLNVETDAVKAVDGIEQHIMEKRKKLGI</sequence>
<reference key="1">
    <citation type="journal article" date="2002" name="J. Mol. Microbiol. Biotechnol.">
        <title>The genome of Methanosarcina mazei: evidence for lateral gene transfer between Bacteria and Archaea.</title>
        <authorList>
            <person name="Deppenmeier U."/>
            <person name="Johann A."/>
            <person name="Hartsch T."/>
            <person name="Merkl R."/>
            <person name="Schmitz R.A."/>
            <person name="Martinez-Arias R."/>
            <person name="Henne A."/>
            <person name="Wiezer A."/>
            <person name="Baeumer S."/>
            <person name="Jacobi C."/>
            <person name="Brueggemann H."/>
            <person name="Lienard T."/>
            <person name="Christmann A."/>
            <person name="Boemecke M."/>
            <person name="Steckel S."/>
            <person name="Bhattacharyya A."/>
            <person name="Lykidis A."/>
            <person name="Overbeek R."/>
            <person name="Klenk H.-P."/>
            <person name="Gunsalus R.P."/>
            <person name="Fritz H.-J."/>
            <person name="Gottschalk G."/>
        </authorList>
    </citation>
    <scope>NUCLEOTIDE SEQUENCE [LARGE SCALE GENOMIC DNA]</scope>
    <source>
        <strain>ATCC BAA-159 / DSM 3647 / Goe1 / Go1 / JCM 11833 / OCM 88</strain>
    </source>
</reference>
<name>COOS2_METMA</name>
<protein>
    <recommendedName>
        <fullName>Carbon monoxide dehydrogenase 2</fullName>
        <shortName>CODH 2</shortName>
        <ecNumber evidence="1">1.2.7.4</ecNumber>
    </recommendedName>
</protein>
<feature type="chain" id="PRO_0000157146" description="Carbon monoxide dehydrogenase 2">
    <location>
        <begin position="1"/>
        <end position="634"/>
    </location>
</feature>
<feature type="binding site" evidence="1">
    <location>
        <position position="44"/>
    </location>
    <ligand>
        <name>[4Fe-4S] cluster</name>
        <dbReference type="ChEBI" id="CHEBI:49883"/>
        <label>1</label>
        <note>ligand shared between dimeric partners</note>
    </ligand>
</feature>
<feature type="binding site" evidence="1">
    <location>
        <position position="53"/>
    </location>
    <ligand>
        <name>[4Fe-4S] cluster</name>
        <dbReference type="ChEBI" id="CHEBI:49883"/>
        <label>2</label>
    </ligand>
</feature>
<feature type="binding site" evidence="1">
    <location>
        <position position="56"/>
    </location>
    <ligand>
        <name>[4Fe-4S] cluster</name>
        <dbReference type="ChEBI" id="CHEBI:49883"/>
        <label>2</label>
    </ligand>
</feature>
<feature type="binding site" evidence="1">
    <location>
        <position position="61"/>
    </location>
    <ligand>
        <name>[4Fe-4S] cluster</name>
        <dbReference type="ChEBI" id="CHEBI:49883"/>
        <label>2</label>
    </ligand>
</feature>
<feature type="binding site" evidence="1">
    <location>
        <position position="73"/>
    </location>
    <ligand>
        <name>[4Fe-4S] cluster</name>
        <dbReference type="ChEBI" id="CHEBI:49883"/>
        <label>2</label>
    </ligand>
</feature>
<feature type="binding site" evidence="1">
    <location>
        <position position="264"/>
    </location>
    <ligand>
        <name>[Ni-4Fe-5S] cluster</name>
        <dbReference type="ChEBI" id="CHEBI:177874"/>
    </ligand>
</feature>
<feature type="binding site" evidence="1">
    <location>
        <position position="343"/>
    </location>
    <ligand>
        <name>[Ni-4Fe-5S] cluster</name>
        <dbReference type="ChEBI" id="CHEBI:177874"/>
    </ligand>
</feature>
<feature type="binding site" evidence="1">
    <location>
        <position position="453"/>
    </location>
    <ligand>
        <name>[Ni-4Fe-5S] cluster</name>
        <dbReference type="ChEBI" id="CHEBI:177874"/>
    </ligand>
</feature>
<feature type="binding site" evidence="1">
    <location>
        <position position="484"/>
    </location>
    <ligand>
        <name>[Ni-4Fe-5S] cluster</name>
        <dbReference type="ChEBI" id="CHEBI:177874"/>
    </ligand>
</feature>
<feature type="binding site" evidence="1">
    <location>
        <position position="525"/>
    </location>
    <ligand>
        <name>[Ni-4Fe-5S] cluster</name>
        <dbReference type="ChEBI" id="CHEBI:177874"/>
    </ligand>
</feature>
<keyword id="KW-0004">4Fe-4S</keyword>
<keyword id="KW-0408">Iron</keyword>
<keyword id="KW-0411">Iron-sulfur</keyword>
<keyword id="KW-0479">Metal-binding</keyword>
<keyword id="KW-0533">Nickel</keyword>
<keyword id="KW-0560">Oxidoreductase</keyword>
<evidence type="ECO:0000250" key="1">
    <source>
        <dbReference type="UniProtKB" id="Q9F8A8"/>
    </source>
</evidence>
<evidence type="ECO:0000305" key="2"/>